<feature type="chain" id="PRO_1000079072" description="Glutaminase">
    <location>
        <begin position="1"/>
        <end position="317"/>
    </location>
</feature>
<feature type="binding site" evidence="1">
    <location>
        <position position="67"/>
    </location>
    <ligand>
        <name>substrate</name>
    </ligand>
</feature>
<feature type="binding site" evidence="1">
    <location>
        <position position="118"/>
    </location>
    <ligand>
        <name>substrate</name>
    </ligand>
</feature>
<feature type="binding site" evidence="1">
    <location>
        <position position="162"/>
    </location>
    <ligand>
        <name>substrate</name>
    </ligand>
</feature>
<feature type="binding site" evidence="1">
    <location>
        <position position="169"/>
    </location>
    <ligand>
        <name>substrate</name>
    </ligand>
</feature>
<feature type="binding site" evidence="1">
    <location>
        <position position="193"/>
    </location>
    <ligand>
        <name>substrate</name>
    </ligand>
</feature>
<feature type="binding site" evidence="1">
    <location>
        <position position="245"/>
    </location>
    <ligand>
        <name>substrate</name>
    </ligand>
</feature>
<feature type="binding site" evidence="1">
    <location>
        <position position="263"/>
    </location>
    <ligand>
        <name>substrate</name>
    </ligand>
</feature>
<protein>
    <recommendedName>
        <fullName evidence="1">Glutaminase</fullName>
        <ecNumber evidence="1">3.5.1.2</ecNumber>
    </recommendedName>
</protein>
<accession>A9WY35</accession>
<organism>
    <name type="scientific">Brucella suis (strain ATCC 23445 / NCTC 10510)</name>
    <dbReference type="NCBI Taxonomy" id="470137"/>
    <lineage>
        <taxon>Bacteria</taxon>
        <taxon>Pseudomonadati</taxon>
        <taxon>Pseudomonadota</taxon>
        <taxon>Alphaproteobacteria</taxon>
        <taxon>Hyphomicrobiales</taxon>
        <taxon>Brucellaceae</taxon>
        <taxon>Brucella/Ochrobactrum group</taxon>
        <taxon>Brucella</taxon>
    </lineage>
</organism>
<gene>
    <name evidence="1" type="primary">glsA</name>
    <name type="ordered locus">BSUIS_B0346</name>
</gene>
<sequence>MSSSSDAIKAALEKGRAAGLSATGGKNADYIPFLASVPSDLFGLAVVTADGQTFKTGDADFAFAIESISKVFTLALVMEEIGPDSVREKVGADPTGLPFNSVIALELHNGKSLSPLVNAGAIATASLVPGDTADARWNNILECQCGFAGRRLKLSNEVNQSEQTTNFHNRAIAWLLYSAGTCYSDPMEAVDIYTRQCSTLVTATDLATMGATLAAGGVNPISGKRMVSAGNVAPILAEMTMEGLYTASGDWAYTVGLPGKSGVGGGIMAVVPGELAIAAFSPPLDPAGNSVKAMAAVAAVADSLGHNLYTTRGKVSS</sequence>
<reference key="1">
    <citation type="submission" date="2007-12" db="EMBL/GenBank/DDBJ databases">
        <title>Brucella suis ATCC 23445 whole genome shotgun sequencing project.</title>
        <authorList>
            <person name="Setubal J.C."/>
            <person name="Bowns C."/>
            <person name="Boyle S."/>
            <person name="Crasta O.R."/>
            <person name="Czar M.J."/>
            <person name="Dharmanolla C."/>
            <person name="Gillespie J.J."/>
            <person name="Kenyon R.W."/>
            <person name="Lu J."/>
            <person name="Mane S."/>
            <person name="Mohapatra S."/>
            <person name="Nagrani S."/>
            <person name="Purkayastha A."/>
            <person name="Rajasimha H.K."/>
            <person name="Shallom J.M."/>
            <person name="Shallom S."/>
            <person name="Shukla M."/>
            <person name="Snyder E.E."/>
            <person name="Sobral B.W."/>
            <person name="Wattam A.R."/>
            <person name="Will R."/>
            <person name="Williams K."/>
            <person name="Yoo H."/>
            <person name="Bruce D."/>
            <person name="Detter C."/>
            <person name="Munk C."/>
            <person name="Brettin T.S."/>
        </authorList>
    </citation>
    <scope>NUCLEOTIDE SEQUENCE [LARGE SCALE GENOMIC DNA]</scope>
    <source>
        <strain>ATCC 23445 / NCTC 10510</strain>
    </source>
</reference>
<keyword id="KW-0378">Hydrolase</keyword>
<dbReference type="EC" id="3.5.1.2" evidence="1"/>
<dbReference type="EMBL" id="CP000912">
    <property type="protein sequence ID" value="ABY39351.1"/>
    <property type="molecule type" value="Genomic_DNA"/>
</dbReference>
<dbReference type="RefSeq" id="WP_004687431.1">
    <property type="nucleotide sequence ID" value="NC_010167.1"/>
</dbReference>
<dbReference type="SMR" id="A9WY35"/>
<dbReference type="GeneID" id="97535500"/>
<dbReference type="KEGG" id="bmt:BSUIS_B0346"/>
<dbReference type="HOGENOM" id="CLU_027932_1_0_5"/>
<dbReference type="Proteomes" id="UP000008545">
    <property type="component" value="Chromosome II"/>
</dbReference>
<dbReference type="GO" id="GO:0004359">
    <property type="term" value="F:glutaminase activity"/>
    <property type="evidence" value="ECO:0007669"/>
    <property type="project" value="UniProtKB-UniRule"/>
</dbReference>
<dbReference type="GO" id="GO:0006537">
    <property type="term" value="P:glutamate biosynthetic process"/>
    <property type="evidence" value="ECO:0007669"/>
    <property type="project" value="TreeGrafter"/>
</dbReference>
<dbReference type="GO" id="GO:0006543">
    <property type="term" value="P:glutamine catabolic process"/>
    <property type="evidence" value="ECO:0007669"/>
    <property type="project" value="TreeGrafter"/>
</dbReference>
<dbReference type="Gene3D" id="3.40.710.10">
    <property type="entry name" value="DD-peptidase/beta-lactamase superfamily"/>
    <property type="match status" value="1"/>
</dbReference>
<dbReference type="HAMAP" id="MF_00313">
    <property type="entry name" value="Glutaminase"/>
    <property type="match status" value="1"/>
</dbReference>
<dbReference type="InterPro" id="IPR012338">
    <property type="entry name" value="Beta-lactam/transpept-like"/>
</dbReference>
<dbReference type="InterPro" id="IPR015868">
    <property type="entry name" value="Glutaminase"/>
</dbReference>
<dbReference type="NCBIfam" id="TIGR03814">
    <property type="entry name" value="Gln_ase"/>
    <property type="match status" value="1"/>
</dbReference>
<dbReference type="NCBIfam" id="NF009020">
    <property type="entry name" value="PRK12356.1"/>
    <property type="match status" value="1"/>
</dbReference>
<dbReference type="PANTHER" id="PTHR12544">
    <property type="entry name" value="GLUTAMINASE"/>
    <property type="match status" value="1"/>
</dbReference>
<dbReference type="PANTHER" id="PTHR12544:SF48">
    <property type="entry name" value="GLUTAMINASE 1"/>
    <property type="match status" value="1"/>
</dbReference>
<dbReference type="Pfam" id="PF04960">
    <property type="entry name" value="Glutaminase"/>
    <property type="match status" value="1"/>
</dbReference>
<dbReference type="SUPFAM" id="SSF56601">
    <property type="entry name" value="beta-lactamase/transpeptidase-like"/>
    <property type="match status" value="1"/>
</dbReference>
<proteinExistence type="inferred from homology"/>
<evidence type="ECO:0000255" key="1">
    <source>
        <dbReference type="HAMAP-Rule" id="MF_00313"/>
    </source>
</evidence>
<comment type="catalytic activity">
    <reaction evidence="1">
        <text>L-glutamine + H2O = L-glutamate + NH4(+)</text>
        <dbReference type="Rhea" id="RHEA:15889"/>
        <dbReference type="ChEBI" id="CHEBI:15377"/>
        <dbReference type="ChEBI" id="CHEBI:28938"/>
        <dbReference type="ChEBI" id="CHEBI:29985"/>
        <dbReference type="ChEBI" id="CHEBI:58359"/>
        <dbReference type="EC" id="3.5.1.2"/>
    </reaction>
</comment>
<comment type="subunit">
    <text evidence="1">Homotetramer.</text>
</comment>
<comment type="similarity">
    <text evidence="1">Belongs to the glutaminase family.</text>
</comment>
<name>GLSA_BRUSI</name>